<comment type="function">
    <text evidence="1">RNA-dependent RNA polymerase, which is responsible for the replication and transcription of the viral RNA genome using antigenomic RNA as an intermediate. During transcription, synthesizes subgenomic RNAs and assures their capping by a cap-snatching mechanism, which involves the endonuclease activity cleaving the host capped pre-mRNAs. These short capped RNAs are then used as primers for viral transcription. The 3'-end of subgenomic mRNAs molecules are heterogeneous and not polyadenylated. The replicase function is to direct synthesis of antigenomic and genomic RNA which are encapsidated and non capped. As a consequence of the use of the same enzyme for both transcription and replication, these mechanisms need to be well coordinated. These processes may be regulated by proteins N and Z in a dose-dependent manner. Z protein inhibits the viral polymerase L und thus the viral transcription and RNA synthesis.</text>
</comment>
<comment type="catalytic activity">
    <reaction evidence="1">
        <text>RNA(n) + a ribonucleoside 5'-triphosphate = RNA(n+1) + diphosphate</text>
        <dbReference type="Rhea" id="RHEA:21248"/>
        <dbReference type="Rhea" id="RHEA-COMP:14527"/>
        <dbReference type="Rhea" id="RHEA-COMP:17342"/>
        <dbReference type="ChEBI" id="CHEBI:33019"/>
        <dbReference type="ChEBI" id="CHEBI:61557"/>
        <dbReference type="ChEBI" id="CHEBI:140395"/>
        <dbReference type="EC" id="2.7.7.48"/>
    </reaction>
</comment>
<comment type="cofactor">
    <cofactor evidence="1">
        <name>Mn(2+)</name>
        <dbReference type="ChEBI" id="CHEBI:29035"/>
    </cofactor>
    <text evidence="1">For endonuclease activity. Binds 2 Mn(2+) ions in the active site. The divalent metal ions are crucial for catalytic activity.</text>
</comment>
<comment type="cofactor">
    <cofactor evidence="1">
        <name>Mg(2+)</name>
        <dbReference type="ChEBI" id="CHEBI:18420"/>
    </cofactor>
    <cofactor evidence="1">
        <name>Mn(2+)</name>
        <dbReference type="ChEBI" id="CHEBI:29035"/>
    </cofactor>
    <text evidence="1">For polymerase activity.</text>
</comment>
<comment type="subunit">
    <text evidence="1">Homomultimer; the oligomeric structure is essential for the polymerase activity. Interacts with nucleoprotein N. Interacts with protein Z; this interaction inhibits viral transcription and replication, Z partially blocks the product exit tunnel for the releasing nascent RNA product.</text>
</comment>
<comment type="interaction">
    <interactant intactId="EBI-15954762">
        <id>Q6IUF8</id>
    </interactant>
    <interactant intactId="EBI-15954744">
        <id>Q6UY77</id>
        <label>Z</label>
    </interactant>
    <organismsDiffer>false</organismsDiffer>
    <experiments>3</experiments>
</comment>
<comment type="subcellular location">
    <subcellularLocation>
        <location evidence="1">Virion</location>
    </subcellularLocation>
    <subcellularLocation>
        <location evidence="1">Host cytoplasm</location>
    </subcellularLocation>
</comment>
<comment type="domain">
    <text evidence="1">The N-terminus contains the endonuclease activity (endoN). The central region contains the RdRp activity.</text>
</comment>
<comment type="miscellaneous">
    <text evidence="1">Classified as His(-) endonuclease since it does not have a histidine upstream of the active site that coordinates the first cation. His(-) endonucleases display very low activity in vitro, although they are clearly active in vivo.</text>
</comment>
<comment type="similarity">
    <text evidence="1">Belongs to the Bunyavirales RNA polymerase family.</text>
</comment>
<keyword id="KW-0002">3D-structure</keyword>
<keyword id="KW-1157">Cap snatching</keyword>
<keyword id="KW-1035">Host cytoplasm</keyword>
<keyword id="KW-0378">Hydrolase</keyword>
<keyword id="KW-0460">Magnesium</keyword>
<keyword id="KW-0464">Manganese</keyword>
<keyword id="KW-0479">Metal-binding</keyword>
<keyword id="KW-0547">Nucleotide-binding</keyword>
<keyword id="KW-0548">Nucleotidyltransferase</keyword>
<keyword id="KW-0696">RNA-directed RNA polymerase</keyword>
<keyword id="KW-0808">Transferase</keyword>
<keyword id="KW-0693">Viral RNA replication</keyword>
<keyword id="KW-0946">Virion</keyword>
<proteinExistence type="evidence at protein level"/>
<feature type="chain" id="PRO_0000361641" description="RNA-directed RNA polymerase L">
    <location>
        <begin position="1"/>
        <end position="2209"/>
    </location>
</feature>
<feature type="domain" description="RdRp catalytic" evidence="1">
    <location>
        <begin position="1172"/>
        <end position="1369"/>
    </location>
</feature>
<feature type="region of interest" description="Endonuclease" evidence="1">
    <location>
        <begin position="26"/>
        <end position="284"/>
    </location>
</feature>
<feature type="active site" evidence="1">
    <location>
        <position position="115"/>
    </location>
</feature>
<feature type="binding site" evidence="1">
    <location>
        <position position="51"/>
    </location>
    <ligand>
        <name>Mn(2+)</name>
        <dbReference type="ChEBI" id="CHEBI:29035"/>
        <label>1</label>
    </ligand>
</feature>
<feature type="binding site" evidence="1">
    <location>
        <position position="89"/>
    </location>
    <ligand>
        <name>Mn(2+)</name>
        <dbReference type="ChEBI" id="CHEBI:29035"/>
        <label>1</label>
    </ligand>
</feature>
<feature type="binding site" evidence="1">
    <location>
        <position position="89"/>
    </location>
    <ligand>
        <name>Mn(2+)</name>
        <dbReference type="ChEBI" id="CHEBI:29035"/>
        <label>2</label>
    </ligand>
</feature>
<feature type="binding site" evidence="1">
    <location>
        <position position="102"/>
    </location>
    <ligand>
        <name>Mn(2+)</name>
        <dbReference type="ChEBI" id="CHEBI:29035"/>
        <label>1</label>
    </ligand>
</feature>
<feature type="binding site" evidence="1">
    <location>
        <position position="1330"/>
    </location>
    <ligand>
        <name>Mg(2+)</name>
        <dbReference type="ChEBI" id="CHEBI:18420"/>
        <note>catalytic; for RdRp activity</note>
    </ligand>
</feature>
<organismHost>
    <name type="scientific">Calomys callosus</name>
    <name type="common">Large vesper mouse</name>
    <dbReference type="NCBI Taxonomy" id="56210"/>
</organismHost>
<organismHost>
    <name type="scientific">Chlorocebus aethiops</name>
    <name type="common">Green monkey</name>
    <name type="synonym">Cercopithecus aethiops</name>
    <dbReference type="NCBI Taxonomy" id="9534"/>
</organismHost>
<organismHost>
    <name type="scientific">Homo sapiens</name>
    <name type="common">Human</name>
    <dbReference type="NCBI Taxonomy" id="9606"/>
</organismHost>
<dbReference type="EC" id="2.7.7.48" evidence="1"/>
<dbReference type="EC" id="3.1.-.-" evidence="1"/>
<dbReference type="EMBL" id="AY624354">
    <property type="protein sequence ID" value="AAT45080.1"/>
    <property type="molecule type" value="Genomic_RNA"/>
</dbReference>
<dbReference type="PDB" id="7VGQ">
    <property type="method" value="EM"/>
    <property type="resolution" value="4.00 A"/>
    <property type="chains" value="A=1-2209"/>
</dbReference>
<dbReference type="PDB" id="7VH1">
    <property type="method" value="EM"/>
    <property type="resolution" value="4.20 A"/>
    <property type="chains" value="A=1-2209"/>
</dbReference>
<dbReference type="PDB" id="7VH2">
    <property type="method" value="EM"/>
    <property type="resolution" value="5.10 A"/>
    <property type="chains" value="A=1-2209"/>
</dbReference>
<dbReference type="PDB" id="7VH3">
    <property type="method" value="EM"/>
    <property type="resolution" value="3.60 A"/>
    <property type="chains" value="A=1-2209"/>
</dbReference>
<dbReference type="PDBsum" id="7VGQ"/>
<dbReference type="PDBsum" id="7VH1"/>
<dbReference type="PDBsum" id="7VH2"/>
<dbReference type="PDBsum" id="7VH3"/>
<dbReference type="EMDB" id="EMD-31975"/>
<dbReference type="EMDB" id="EMD-31983"/>
<dbReference type="EMDB" id="EMD-31984"/>
<dbReference type="EMDB" id="EMD-31985"/>
<dbReference type="SMR" id="Q6IUF8"/>
<dbReference type="DIP" id="DIP-59721N"/>
<dbReference type="IntAct" id="Q6IUF8">
    <property type="interactions" value="1"/>
</dbReference>
<dbReference type="Proteomes" id="UP000009263">
    <property type="component" value="Genome"/>
</dbReference>
<dbReference type="GO" id="GO:0030430">
    <property type="term" value="C:host cell cytoplasm"/>
    <property type="evidence" value="ECO:0007669"/>
    <property type="project" value="UniProtKB-SubCell"/>
</dbReference>
<dbReference type="GO" id="GO:0044423">
    <property type="term" value="C:virion component"/>
    <property type="evidence" value="ECO:0007669"/>
    <property type="project" value="UniProtKB-KW"/>
</dbReference>
<dbReference type="GO" id="GO:0016787">
    <property type="term" value="F:hydrolase activity"/>
    <property type="evidence" value="ECO:0007669"/>
    <property type="project" value="UniProtKB-KW"/>
</dbReference>
<dbReference type="GO" id="GO:0046872">
    <property type="term" value="F:metal ion binding"/>
    <property type="evidence" value="ECO:0007669"/>
    <property type="project" value="UniProtKB-KW"/>
</dbReference>
<dbReference type="GO" id="GO:0000166">
    <property type="term" value="F:nucleotide binding"/>
    <property type="evidence" value="ECO:0007669"/>
    <property type="project" value="UniProtKB-UniRule"/>
</dbReference>
<dbReference type="GO" id="GO:0003968">
    <property type="term" value="F:RNA-directed RNA polymerase activity"/>
    <property type="evidence" value="ECO:0007669"/>
    <property type="project" value="UniProtKB-UniRule"/>
</dbReference>
<dbReference type="GO" id="GO:0075526">
    <property type="term" value="P:cap snatching"/>
    <property type="evidence" value="ECO:0007669"/>
    <property type="project" value="UniProtKB-UniRule"/>
</dbReference>
<dbReference type="GO" id="GO:0039689">
    <property type="term" value="P:negative stranded viral RNA replication"/>
    <property type="evidence" value="ECO:0000250"/>
    <property type="project" value="UniProtKB"/>
</dbReference>
<dbReference type="GO" id="GO:0039696">
    <property type="term" value="P:RNA-templated viral transcription"/>
    <property type="evidence" value="ECO:0000250"/>
    <property type="project" value="UniProtKB"/>
</dbReference>
<dbReference type="FunFam" id="3.30.70.2640:FF:000001">
    <property type="entry name" value="RNA-directed RNA polymerase L"/>
    <property type="match status" value="1"/>
</dbReference>
<dbReference type="Gene3D" id="3.30.70.2640">
    <property type="entry name" value="Arenavirus RNA polymerase"/>
    <property type="match status" value="1"/>
</dbReference>
<dbReference type="Gene3D" id="1.20.1440.300">
    <property type="entry name" value="RNA-directed RNA polymerase L, helical domain"/>
    <property type="match status" value="1"/>
</dbReference>
<dbReference type="HAMAP" id="MF_04086">
    <property type="entry name" value="ARENA_L"/>
    <property type="match status" value="1"/>
</dbReference>
<dbReference type="InterPro" id="IPR026382">
    <property type="entry name" value="CapSnatch_arenavir"/>
</dbReference>
<dbReference type="InterPro" id="IPR048006">
    <property type="entry name" value="CapSnatch_bunyavir"/>
</dbReference>
<dbReference type="InterPro" id="IPR007099">
    <property type="entry name" value="RNA-dir_pol_NSvirus"/>
</dbReference>
<dbReference type="InterPro" id="IPR010453">
    <property type="entry name" value="RNA_pol_arenavir"/>
</dbReference>
<dbReference type="NCBIfam" id="TIGR04202">
    <property type="entry name" value="capSnatchArena"/>
    <property type="match status" value="1"/>
</dbReference>
<dbReference type="Pfam" id="PF06317">
    <property type="entry name" value="Arena_RNA_pol"/>
    <property type="match status" value="1"/>
</dbReference>
<dbReference type="Pfam" id="PF17296">
    <property type="entry name" value="ArenaCapSnatch"/>
    <property type="match status" value="1"/>
</dbReference>
<dbReference type="PIRSF" id="PIRSF000836">
    <property type="entry name" value="L_ArenaV"/>
    <property type="match status" value="1"/>
</dbReference>
<dbReference type="PROSITE" id="PS50525">
    <property type="entry name" value="RDRP_SSRNA_NEG_SEG"/>
    <property type="match status" value="1"/>
</dbReference>
<evidence type="ECO:0000255" key="1">
    <source>
        <dbReference type="HAMAP-Rule" id="MF_04086"/>
    </source>
</evidence>
<evidence type="ECO:0007744" key="2">
    <source>
        <dbReference type="PDB" id="7VGQ"/>
    </source>
</evidence>
<evidence type="ECO:0007744" key="3">
    <source>
        <dbReference type="PDB" id="7VH1"/>
    </source>
</evidence>
<evidence type="ECO:0007744" key="4">
    <source>
        <dbReference type="PDB" id="7VH2"/>
    </source>
</evidence>
<evidence type="ECO:0007744" key="5">
    <source>
        <dbReference type="PDB" id="7VH3"/>
    </source>
</evidence>
<reference key="1">
    <citation type="submission" date="2004-05" db="EMBL/GenBank/DDBJ databases">
        <authorList>
            <person name="Hajjaj A."/>
            <person name="Chain P.S.G."/>
            <person name="Smith K.L."/>
            <person name="Imbro P.M."/>
            <person name="Malfatti S.A."/>
        </authorList>
    </citation>
    <scope>NUCLEOTIDE SEQUENCE [GENOMIC RNA]</scope>
    <source>
        <strain>Chicava</strain>
    </source>
</reference>
<reference key="2">
    <citation type="submission" date="2004-05" db="EMBL/GenBank/DDBJ databases">
        <authorList>
            <person name="Jahrling P.B."/>
            <person name="Geisbert J."/>
            <person name="Ibrahim M.S."/>
        </authorList>
    </citation>
    <scope>NUCLEOTIDE SEQUENCE [GENOMIC RNA]</scope>
    <source>
        <strain>Chicava</strain>
    </source>
</reference>
<reference key="3">
    <citation type="journal article" date="2017" name="Crit. Rev. Microbiol.">
        <title>Bunyaviridae RdRps: structure, motifs, and RNA synthesis machinery.</title>
        <authorList>
            <person name="Amroun A."/>
            <person name="Priet S."/>
            <person name="de Lamballerie X."/>
            <person name="Querat G."/>
        </authorList>
    </citation>
    <scope>REVIEW</scope>
</reference>
<reference key="4">
    <citation type="journal article" date="2020" name="Trends Microbiol.">
        <title>The Cap-Snatching Mechanism of Bunyaviruses.</title>
        <authorList>
            <person name="Olschewski S."/>
            <person name="Cusack S."/>
            <person name="Rosenthal M."/>
        </authorList>
    </citation>
    <scope>REVIEW</scope>
</reference>
<reference evidence="2 3 4 5" key="5">
    <citation type="journal article" date="2021" name="Nat. Commun.">
        <title>Structure of Machupo virus polymerase in complex with matrix protein Z.</title>
        <authorList>
            <person name="Ma J."/>
            <person name="Zhang S."/>
            <person name="Zhang X."/>
        </authorList>
    </citation>
    <scope>STRUCTURE BY ELECTRON MICROSCOPY (3.60 ANGSTROMS)</scope>
    <scope>INTERACTION WITH PROTEIN Z</scope>
</reference>
<protein>
    <recommendedName>
        <fullName evidence="1">RNA-directed RNA polymerase L</fullName>
        <shortName evidence="1">Protein L</shortName>
        <ecNumber evidence="1">2.7.7.48</ecNumber>
    </recommendedName>
    <alternativeName>
        <fullName evidence="1">Large structural protein</fullName>
    </alternativeName>
    <alternativeName>
        <fullName evidence="1">Replicase</fullName>
    </alternativeName>
    <alternativeName>
        <fullName evidence="1">Transcriptase</fullName>
    </alternativeName>
    <domain>
        <recommendedName>
            <fullName evidence="1">cap-snatching endonuclease</fullName>
            <ecNumber evidence="1">3.1.-.-</ecNumber>
        </recommendedName>
    </domain>
</protein>
<accession>Q6IUF8</accession>
<gene>
    <name evidence="1" type="primary">L</name>
</gene>
<sequence>MDEYVQELKGLIRKHIPDRCEFAHQKVTFLSQVHPSPLLTEGFKLLSSLVELESCEAHACQANTDQRFVDVILSDNGILCPTLPKVIPDGFKLTGKTLILLETFVRVNPDEFEKKWKADMSKLLNLKHDLQKSGVTLVPIVDGRSNYNNRFVADWVIERMRWLLIEILKASKSMLEIDIEDQEYQRLIHSLSNVKNQSLGLENLEHLKRNSLDYDERLNESLFIGLKGDIRESTVREELIKLKMWFKDEVFSKGLGKFKLTDRRELLESLSSLGAHLDSDVSSCPFCNNKLMEIVYNVTFSSVERTDGAATVDQQFSTTHTNIEKHYLSVLSLCNKIKGLKVFNTRRNTLLFLDLIMVNLMVDISESCQDAIESLRKSGLIVGQMVMLVNDRVLDILEAIKLIRKKIGTNPNWVKNCSKILERSHPEIWLQLNTLIRQPDFNSLISIAQYLVSDRPIMRYSVERGSDKICRHKLFQEMSSFEQMRLFKTLSSISLSLINSMKTSFSSRLLVNEREFSKYFGNVRLRECYAQRFYLAESLVGFLFYQKTGERSRCYSVYLSDNGVMSEQGSFYCDPKRFFLPVFSDEVLAGMCEEMTSWLDFDTGLMNDTGPILRLLVLAILCSPSKRNQTFLQGLRYFLMAFANQIHHIDLISKLVVECKSSSEVVVQRLAVGLFIRLLGGESDASSFFSRRFKYLLNVSYLCHLITKETPDRLTDQIKCFEKFIEPKVKFGCAVVNPSLNGKLTVDQEDIMINGLKKFFSKSLRDTEDVQTPGVCKELLNYCVSLFNRGKLKVSGELKNNPFRPNITSTALDLSSNKSVVIPKLDELGNILSTYDKEKLVSACVSSMAERFKTKGRYNLDPESTDYLILKNLTGLVSAGPKAKSSQEELSLMYETLTEEQVESFNEIKYDVQVALAKMADNSVNTRIKNLGRADNSVKNGNNPLDNLWSPFGVMKEIRAEVSLHEVKDFDPDVLPSDVYKELCDAVYKSSEKCNFFLEEVLDVCPLGLLLKNLTTSSYMEEEYFMCFKYLLIQGHFDQKLGSYEHKSRSRLGFTDETLRLKDEVRLSIRESNSEAIADKLDKSYFTNAALRNLCFYSEDSPTEFTSISSNSGNLKFGLSYKEQVGSNRELYVGDLNTKLMTRLVEDFSEAVGNSMKYTCLNSEKEFERAICDMKMAVNNGDLSCSYDHSKWGPTMSPALFLALLQMLELRTPVDRSKIDLDSVKSILKWHLHKVVEVPINVAEAYCIGKLKRSLGLMGCGSTSLSEEFFHQTMQLSGQIPSHIMSVLDMGQGILHNTSDLYGLITEQFLCYALDLLYDVIPVSYTSSDDQITLVKTPSLDIEGGSDAAEWLEMICFHEFLSSKLNKFVSPKSVIGTFVAEFKSRFFVMGEETPLLTKFVSAALHNVKCKTPTQLSETIDTICDQCIANGVSTKIVARISKRVNQLIRYSGYGDTPFGAIEDQDVKDWVDGSRGYRLQRKIEAIFYDDKETSFIRNCARKVFNDIKRGRIFEENLINLIGRGGDEALTGFLQYAGCSEQEVNRVLNYRWVNLSSFGDLRLVLRTKLMTSRRVLEREEVPTLIKTLQSKLSRNFTKGVKKILAESINKSAFQSSVASGFIGFCKSMGSKCVRDGKGGFLYIKEVYSGINVCICEICALKPKIIYCNDSLNKVSQFSKPILWDYFSLVLTNACELGEWVFSTVKEPQKPLVLNNQNFFWAVKPKVVRQIEDQLGMNHVLQSIRRNYPVLFDEHLAPFMNDLQVSRTMDSGRLKFLDVCIALDMMNENLGIISHLLKTRDNSVYIVKQSDCALAHIRQSSYTDWELGLSPQQICTNFKTQLVLSSMVNPLVLSTSCLKSFFWFNEVLELEDDSQIELAELTDFALMVKNQNVSRAMFVEDIAMGYVVSNFEGVRISLSNVMVDGVQLPPKEKAPDVGVLFGLKAENVIVGLVVQIDHVRMSTKFKLRRKMVYSFSLECTMDVGDIQNKEVILKVVAVDQSVSGSGGNHMLLDGVPVIASLPLFTGQASFDLAAMLIESNLAGSNDNFLMSNVTLDLGGFSPELSDKYSYRLSGPENQEDPLVLKDGAFYVGGERLSTYKVELTGDLVVKALGALEDDEGVVSMLHQLWPYLKATSQVILFQQEDFTIVHDLYKIQLTKSIESFGEWIEFTNFKVAYSKSLKELVISDTQGSFRLKGVMCRPLANTLQVEDIE</sequence>
<organism>
    <name type="scientific">Machupo virus</name>
    <name type="common">MACV</name>
    <dbReference type="NCBI Taxonomy" id="3052317"/>
    <lineage>
        <taxon>Viruses</taxon>
        <taxon>Riboviria</taxon>
        <taxon>Orthornavirae</taxon>
        <taxon>Negarnaviricota</taxon>
        <taxon>Polyploviricotina</taxon>
        <taxon>Ellioviricetes</taxon>
        <taxon>Bunyavirales</taxon>
        <taxon>Arenaviridae</taxon>
        <taxon>Mammarenavirus</taxon>
    </lineage>
</organism>
<name>L_MACHU</name>